<proteinExistence type="inferred from homology"/>
<accession>Q28PE1</accession>
<feature type="chain" id="PRO_0000313268" description="DNA ligase">
    <location>
        <begin position="1"/>
        <end position="752"/>
    </location>
</feature>
<feature type="domain" description="BRCT" evidence="1">
    <location>
        <begin position="673"/>
        <end position="752"/>
    </location>
</feature>
<feature type="region of interest" description="Disordered" evidence="2">
    <location>
        <begin position="599"/>
        <end position="618"/>
    </location>
</feature>
<feature type="compositionally biased region" description="Basic and acidic residues" evidence="2">
    <location>
        <begin position="599"/>
        <end position="615"/>
    </location>
</feature>
<feature type="active site" description="N6-AMP-lysine intermediate" evidence="1">
    <location>
        <position position="133"/>
    </location>
</feature>
<feature type="binding site" evidence="1">
    <location>
        <begin position="48"/>
        <end position="52"/>
    </location>
    <ligand>
        <name>NAD(+)</name>
        <dbReference type="ChEBI" id="CHEBI:57540"/>
    </ligand>
</feature>
<feature type="binding site" evidence="1">
    <location>
        <begin position="97"/>
        <end position="98"/>
    </location>
    <ligand>
        <name>NAD(+)</name>
        <dbReference type="ChEBI" id="CHEBI:57540"/>
    </ligand>
</feature>
<feature type="binding site" evidence="1">
    <location>
        <position position="131"/>
    </location>
    <ligand>
        <name>NAD(+)</name>
        <dbReference type="ChEBI" id="CHEBI:57540"/>
    </ligand>
</feature>
<feature type="binding site" evidence="1">
    <location>
        <position position="154"/>
    </location>
    <ligand>
        <name>NAD(+)</name>
        <dbReference type="ChEBI" id="CHEBI:57540"/>
    </ligand>
</feature>
<feature type="binding site" evidence="1">
    <location>
        <position position="189"/>
    </location>
    <ligand>
        <name>NAD(+)</name>
        <dbReference type="ChEBI" id="CHEBI:57540"/>
    </ligand>
</feature>
<feature type="binding site" evidence="1">
    <location>
        <position position="305"/>
    </location>
    <ligand>
        <name>NAD(+)</name>
        <dbReference type="ChEBI" id="CHEBI:57540"/>
    </ligand>
</feature>
<feature type="binding site" evidence="1">
    <location>
        <position position="329"/>
    </location>
    <ligand>
        <name>NAD(+)</name>
        <dbReference type="ChEBI" id="CHEBI:57540"/>
    </ligand>
</feature>
<feature type="binding site" evidence="1">
    <location>
        <position position="434"/>
    </location>
    <ligand>
        <name>Zn(2+)</name>
        <dbReference type="ChEBI" id="CHEBI:29105"/>
    </ligand>
</feature>
<feature type="binding site" evidence="1">
    <location>
        <position position="437"/>
    </location>
    <ligand>
        <name>Zn(2+)</name>
        <dbReference type="ChEBI" id="CHEBI:29105"/>
    </ligand>
</feature>
<feature type="binding site" evidence="1">
    <location>
        <position position="452"/>
    </location>
    <ligand>
        <name>Zn(2+)</name>
        <dbReference type="ChEBI" id="CHEBI:29105"/>
    </ligand>
</feature>
<feature type="binding site" evidence="1">
    <location>
        <position position="458"/>
    </location>
    <ligand>
        <name>Zn(2+)</name>
        <dbReference type="ChEBI" id="CHEBI:29105"/>
    </ligand>
</feature>
<sequence length="752" mass="80820">MSQPDQEAQALAAGFSADAAKTRLAELAKRLSDANTAYHAADAPDLSDADYDALKRENAAIEAAFPDLKRADSPSDQVGAAPAEGFSKLTHTQRMLSLANAFDAGDVPDFVAGIRRYLNLGAEADLPFTAEPKIDGLSLSLRYEDGQLVSAATRGDGAIGENVTANARTIDDIPQTLTDAPDVLEVRGEVYMSHADFAALNDRQAEAGAKTFANPRNAAAGSLRQLDASITRSRPLRFFAYAWGEVSAPLAATQSGALNTLKTLGFQINDRTKTCHSAEDMLAHYASIEQDRADLGYDIDGVVYKIDDLDYQRRLGMRSTTPRWAIAHKFPAELAWTTLEAIDIQVGRTGALSPVARLTPVTVGGVVVSNATLHNEDYIAGRDANGGPIRDGKDIRVGDRVQVYRAGDVIPKVADVDLAKRPENTAKYAFPDHCPQCQSEAIREEGDAVRRCTGGLICPAQAVEKLKHFVSRAAFDIDGLGAKQVEAFYLDGWIAEPADIFRLKENYGEGMKQLRNREGWGEKSATSLFNAIDDKRSIALHRLIFALGIRHVGEVAASDLARHFTTWKALAEIVDQAAPAAEAHRRAEDAVLAERKAAADEGRRASLQPQRDKAWADTPEPAKAAWDDLTGIDGIGATVAVSLVTTFQQARERASIDRLITELTDIQPPEARATQSAVAGLTVVFTGALERMTRAEAKARAEAMGAKVSGSVSAKTDIVVAGPGAGSKEKKAKDLGIELLTEEQWLDRIGDA</sequence>
<dbReference type="EC" id="6.5.1.2" evidence="1"/>
<dbReference type="EMBL" id="CP000264">
    <property type="protein sequence ID" value="ABD55421.1"/>
    <property type="molecule type" value="Genomic_DNA"/>
</dbReference>
<dbReference type="RefSeq" id="WP_011455625.1">
    <property type="nucleotide sequence ID" value="NC_007802.1"/>
</dbReference>
<dbReference type="SMR" id="Q28PE1"/>
<dbReference type="STRING" id="290400.Jann_2504"/>
<dbReference type="KEGG" id="jan:Jann_2504"/>
<dbReference type="eggNOG" id="COG0272">
    <property type="taxonomic scope" value="Bacteria"/>
</dbReference>
<dbReference type="HOGENOM" id="CLU_007764_2_1_5"/>
<dbReference type="OrthoDB" id="9759736at2"/>
<dbReference type="Proteomes" id="UP000008326">
    <property type="component" value="Chromosome"/>
</dbReference>
<dbReference type="GO" id="GO:0005829">
    <property type="term" value="C:cytosol"/>
    <property type="evidence" value="ECO:0007669"/>
    <property type="project" value="TreeGrafter"/>
</dbReference>
<dbReference type="GO" id="GO:0003911">
    <property type="term" value="F:DNA ligase (NAD+) activity"/>
    <property type="evidence" value="ECO:0007669"/>
    <property type="project" value="UniProtKB-UniRule"/>
</dbReference>
<dbReference type="GO" id="GO:0046872">
    <property type="term" value="F:metal ion binding"/>
    <property type="evidence" value="ECO:0007669"/>
    <property type="project" value="UniProtKB-KW"/>
</dbReference>
<dbReference type="GO" id="GO:0006281">
    <property type="term" value="P:DNA repair"/>
    <property type="evidence" value="ECO:0007669"/>
    <property type="project" value="UniProtKB-KW"/>
</dbReference>
<dbReference type="GO" id="GO:0006260">
    <property type="term" value="P:DNA replication"/>
    <property type="evidence" value="ECO:0007669"/>
    <property type="project" value="UniProtKB-KW"/>
</dbReference>
<dbReference type="CDD" id="cd17748">
    <property type="entry name" value="BRCT_DNA_ligase_like"/>
    <property type="match status" value="1"/>
</dbReference>
<dbReference type="CDD" id="cd00114">
    <property type="entry name" value="LIGANc"/>
    <property type="match status" value="1"/>
</dbReference>
<dbReference type="FunFam" id="3.30.470.30:FF:000001">
    <property type="entry name" value="DNA ligase"/>
    <property type="match status" value="1"/>
</dbReference>
<dbReference type="Gene3D" id="6.20.10.30">
    <property type="match status" value="1"/>
</dbReference>
<dbReference type="Gene3D" id="1.10.150.20">
    <property type="entry name" value="5' to 3' exonuclease, C-terminal subdomain"/>
    <property type="match status" value="2"/>
</dbReference>
<dbReference type="Gene3D" id="3.40.50.10190">
    <property type="entry name" value="BRCT domain"/>
    <property type="match status" value="1"/>
</dbReference>
<dbReference type="Gene3D" id="3.30.470.30">
    <property type="entry name" value="DNA ligase/mRNA capping enzyme"/>
    <property type="match status" value="1"/>
</dbReference>
<dbReference type="Gene3D" id="1.10.287.610">
    <property type="entry name" value="Helix hairpin bin"/>
    <property type="match status" value="1"/>
</dbReference>
<dbReference type="Gene3D" id="2.40.50.140">
    <property type="entry name" value="Nucleic acid-binding proteins"/>
    <property type="match status" value="1"/>
</dbReference>
<dbReference type="HAMAP" id="MF_01588">
    <property type="entry name" value="DNA_ligase_A"/>
    <property type="match status" value="1"/>
</dbReference>
<dbReference type="InterPro" id="IPR001357">
    <property type="entry name" value="BRCT_dom"/>
</dbReference>
<dbReference type="InterPro" id="IPR036420">
    <property type="entry name" value="BRCT_dom_sf"/>
</dbReference>
<dbReference type="InterPro" id="IPR041663">
    <property type="entry name" value="DisA/LigA_HHH"/>
</dbReference>
<dbReference type="InterPro" id="IPR001679">
    <property type="entry name" value="DNA_ligase"/>
</dbReference>
<dbReference type="InterPro" id="IPR018239">
    <property type="entry name" value="DNA_ligase_AS"/>
</dbReference>
<dbReference type="InterPro" id="IPR033136">
    <property type="entry name" value="DNA_ligase_CS"/>
</dbReference>
<dbReference type="InterPro" id="IPR013839">
    <property type="entry name" value="DNAligase_adenylation"/>
</dbReference>
<dbReference type="InterPro" id="IPR013840">
    <property type="entry name" value="DNAligase_N"/>
</dbReference>
<dbReference type="InterPro" id="IPR012340">
    <property type="entry name" value="NA-bd_OB-fold"/>
</dbReference>
<dbReference type="InterPro" id="IPR004150">
    <property type="entry name" value="NAD_DNA_ligase_OB"/>
</dbReference>
<dbReference type="InterPro" id="IPR010994">
    <property type="entry name" value="RuvA_2-like"/>
</dbReference>
<dbReference type="InterPro" id="IPR004149">
    <property type="entry name" value="Znf_DNAligase_C4"/>
</dbReference>
<dbReference type="NCBIfam" id="TIGR00575">
    <property type="entry name" value="dnlj"/>
    <property type="match status" value="1"/>
</dbReference>
<dbReference type="NCBIfam" id="NF005932">
    <property type="entry name" value="PRK07956.1"/>
    <property type="match status" value="1"/>
</dbReference>
<dbReference type="PANTHER" id="PTHR23389">
    <property type="entry name" value="CHROMOSOME TRANSMISSION FIDELITY FACTOR 18"/>
    <property type="match status" value="1"/>
</dbReference>
<dbReference type="PANTHER" id="PTHR23389:SF9">
    <property type="entry name" value="DNA LIGASE"/>
    <property type="match status" value="1"/>
</dbReference>
<dbReference type="Pfam" id="PF00533">
    <property type="entry name" value="BRCT"/>
    <property type="match status" value="1"/>
</dbReference>
<dbReference type="Pfam" id="PF01653">
    <property type="entry name" value="DNA_ligase_aden"/>
    <property type="match status" value="1"/>
</dbReference>
<dbReference type="Pfam" id="PF03120">
    <property type="entry name" value="DNA_ligase_OB"/>
    <property type="match status" value="1"/>
</dbReference>
<dbReference type="Pfam" id="PF03119">
    <property type="entry name" value="DNA_ligase_ZBD"/>
    <property type="match status" value="1"/>
</dbReference>
<dbReference type="Pfam" id="PF12826">
    <property type="entry name" value="HHH_2"/>
    <property type="match status" value="1"/>
</dbReference>
<dbReference type="PIRSF" id="PIRSF001604">
    <property type="entry name" value="LigA"/>
    <property type="match status" value="1"/>
</dbReference>
<dbReference type="SMART" id="SM00292">
    <property type="entry name" value="BRCT"/>
    <property type="match status" value="1"/>
</dbReference>
<dbReference type="SMART" id="SM00532">
    <property type="entry name" value="LIGANc"/>
    <property type="match status" value="1"/>
</dbReference>
<dbReference type="SUPFAM" id="SSF52113">
    <property type="entry name" value="BRCT domain"/>
    <property type="match status" value="1"/>
</dbReference>
<dbReference type="SUPFAM" id="SSF56091">
    <property type="entry name" value="DNA ligase/mRNA capping enzyme, catalytic domain"/>
    <property type="match status" value="1"/>
</dbReference>
<dbReference type="SUPFAM" id="SSF50249">
    <property type="entry name" value="Nucleic acid-binding proteins"/>
    <property type="match status" value="1"/>
</dbReference>
<dbReference type="SUPFAM" id="SSF47781">
    <property type="entry name" value="RuvA domain 2-like"/>
    <property type="match status" value="1"/>
</dbReference>
<dbReference type="PROSITE" id="PS50172">
    <property type="entry name" value="BRCT"/>
    <property type="match status" value="1"/>
</dbReference>
<dbReference type="PROSITE" id="PS01055">
    <property type="entry name" value="DNA_LIGASE_N1"/>
    <property type="match status" value="1"/>
</dbReference>
<dbReference type="PROSITE" id="PS01056">
    <property type="entry name" value="DNA_LIGASE_N2"/>
    <property type="match status" value="1"/>
</dbReference>
<keyword id="KW-0227">DNA damage</keyword>
<keyword id="KW-0234">DNA repair</keyword>
<keyword id="KW-0235">DNA replication</keyword>
<keyword id="KW-0436">Ligase</keyword>
<keyword id="KW-0460">Magnesium</keyword>
<keyword id="KW-0464">Manganese</keyword>
<keyword id="KW-0479">Metal-binding</keyword>
<keyword id="KW-0520">NAD</keyword>
<keyword id="KW-1185">Reference proteome</keyword>
<keyword id="KW-0862">Zinc</keyword>
<protein>
    <recommendedName>
        <fullName evidence="1">DNA ligase</fullName>
        <ecNumber evidence="1">6.5.1.2</ecNumber>
    </recommendedName>
    <alternativeName>
        <fullName evidence="1">Polydeoxyribonucleotide synthase [NAD(+)]</fullName>
    </alternativeName>
</protein>
<organism>
    <name type="scientific">Jannaschia sp. (strain CCS1)</name>
    <dbReference type="NCBI Taxonomy" id="290400"/>
    <lineage>
        <taxon>Bacteria</taxon>
        <taxon>Pseudomonadati</taxon>
        <taxon>Pseudomonadota</taxon>
        <taxon>Alphaproteobacteria</taxon>
        <taxon>Rhodobacterales</taxon>
        <taxon>Roseobacteraceae</taxon>
        <taxon>Jannaschia</taxon>
    </lineage>
</organism>
<evidence type="ECO:0000255" key="1">
    <source>
        <dbReference type="HAMAP-Rule" id="MF_01588"/>
    </source>
</evidence>
<evidence type="ECO:0000256" key="2">
    <source>
        <dbReference type="SAM" id="MobiDB-lite"/>
    </source>
</evidence>
<comment type="function">
    <text evidence="1">DNA ligase that catalyzes the formation of phosphodiester linkages between 5'-phosphoryl and 3'-hydroxyl groups in double-stranded DNA using NAD as a coenzyme and as the energy source for the reaction. It is essential for DNA replication and repair of damaged DNA.</text>
</comment>
<comment type="catalytic activity">
    <reaction evidence="1">
        <text>NAD(+) + (deoxyribonucleotide)n-3'-hydroxyl + 5'-phospho-(deoxyribonucleotide)m = (deoxyribonucleotide)n+m + AMP + beta-nicotinamide D-nucleotide.</text>
        <dbReference type="EC" id="6.5.1.2"/>
    </reaction>
</comment>
<comment type="cofactor">
    <cofactor evidence="1">
        <name>Mg(2+)</name>
        <dbReference type="ChEBI" id="CHEBI:18420"/>
    </cofactor>
    <cofactor evidence="1">
        <name>Mn(2+)</name>
        <dbReference type="ChEBI" id="CHEBI:29035"/>
    </cofactor>
</comment>
<comment type="similarity">
    <text evidence="1">Belongs to the NAD-dependent DNA ligase family. LigA subfamily.</text>
</comment>
<gene>
    <name evidence="1" type="primary">ligA</name>
    <name type="ordered locus">Jann_2504</name>
</gene>
<reference key="1">
    <citation type="submission" date="2006-02" db="EMBL/GenBank/DDBJ databases">
        <title>Complete sequence of chromosome of Jannaschia sp. CCS1.</title>
        <authorList>
            <consortium name="US DOE Joint Genome Institute"/>
            <person name="Copeland A."/>
            <person name="Lucas S."/>
            <person name="Lapidus A."/>
            <person name="Barry K."/>
            <person name="Detter J.C."/>
            <person name="Glavina del Rio T."/>
            <person name="Hammon N."/>
            <person name="Israni S."/>
            <person name="Pitluck S."/>
            <person name="Brettin T."/>
            <person name="Bruce D."/>
            <person name="Han C."/>
            <person name="Tapia R."/>
            <person name="Gilna P."/>
            <person name="Chertkov O."/>
            <person name="Saunders E."/>
            <person name="Schmutz J."/>
            <person name="Larimer F."/>
            <person name="Land M."/>
            <person name="Kyrpides N."/>
            <person name="Lykidis A."/>
            <person name="Moran M.A."/>
            <person name="Belas R."/>
            <person name="Ye W."/>
            <person name="Buchan A."/>
            <person name="Gonzalez J.M."/>
            <person name="Schell M.A."/>
            <person name="Richardson P."/>
        </authorList>
    </citation>
    <scope>NUCLEOTIDE SEQUENCE [LARGE SCALE GENOMIC DNA]</scope>
    <source>
        <strain>CCS1</strain>
    </source>
</reference>
<name>DNLJ_JANSC</name>